<reference key="1">
    <citation type="journal article" date="2001" name="Nature">
        <title>Genome sequence of enterohaemorrhagic Escherichia coli O157:H7.</title>
        <authorList>
            <person name="Perna N.T."/>
            <person name="Plunkett G. III"/>
            <person name="Burland V."/>
            <person name="Mau B."/>
            <person name="Glasner J.D."/>
            <person name="Rose D.J."/>
            <person name="Mayhew G.F."/>
            <person name="Evans P.S."/>
            <person name="Gregor J."/>
            <person name="Kirkpatrick H.A."/>
            <person name="Posfai G."/>
            <person name="Hackett J."/>
            <person name="Klink S."/>
            <person name="Boutin A."/>
            <person name="Shao Y."/>
            <person name="Miller L."/>
            <person name="Grotbeck E.J."/>
            <person name="Davis N.W."/>
            <person name="Lim A."/>
            <person name="Dimalanta E.T."/>
            <person name="Potamousis K."/>
            <person name="Apodaca J."/>
            <person name="Anantharaman T.S."/>
            <person name="Lin J."/>
            <person name="Yen G."/>
            <person name="Schwartz D.C."/>
            <person name="Welch R.A."/>
            <person name="Blattner F.R."/>
        </authorList>
    </citation>
    <scope>NUCLEOTIDE SEQUENCE [LARGE SCALE GENOMIC DNA]</scope>
    <source>
        <strain>O157:H7 / EDL933 / ATCC 700927 / EHEC</strain>
    </source>
</reference>
<reference key="2">
    <citation type="journal article" date="2001" name="DNA Res.">
        <title>Complete genome sequence of enterohemorrhagic Escherichia coli O157:H7 and genomic comparison with a laboratory strain K-12.</title>
        <authorList>
            <person name="Hayashi T."/>
            <person name="Makino K."/>
            <person name="Ohnishi M."/>
            <person name="Kurokawa K."/>
            <person name="Ishii K."/>
            <person name="Yokoyama K."/>
            <person name="Han C.-G."/>
            <person name="Ohtsubo E."/>
            <person name="Nakayama K."/>
            <person name="Murata T."/>
            <person name="Tanaka M."/>
            <person name="Tobe T."/>
            <person name="Iida T."/>
            <person name="Takami H."/>
            <person name="Honda T."/>
            <person name="Sasakawa C."/>
            <person name="Ogasawara N."/>
            <person name="Yasunaga T."/>
            <person name="Kuhara S."/>
            <person name="Shiba T."/>
            <person name="Hattori M."/>
            <person name="Shinagawa H."/>
        </authorList>
    </citation>
    <scope>NUCLEOTIDE SEQUENCE [LARGE SCALE GENOMIC DNA]</scope>
    <source>
        <strain>O157:H7 / Sakai / RIMD 0509952 / EHEC</strain>
    </source>
</reference>
<proteinExistence type="inferred from homology"/>
<sequence>MGKIIGIDLGTTNSCVAIMDGTTPRVLENAEGDRTTPSIIAYTQDGETLVGQPAKRQAVTNPQNTLFAIKRLIGRRFQDEEVQRDVSIMPFKIIAADNGDAWVEVKGQKMAPPQISAEVLKKMKKTAEDYLGEPVTEAVITVPAYFNDAQRQATKDAGRIAGLEVKRIINEPTAAALAYGLDKGTGNRTIAVYDLGGGTFDISIIEIDEVDGEKTFEVLATNGDTHLGGEDFDSRLINYLVEEFKKDQGIDLRNDPLAMQRLKEAAEKAKIELSSAQQTDVNLPYITADATGPKHMNIKVTRAKLESLVEDLVNRSIEPLKVALQDAGLSVSDIDDVILVGGQTRMPMVQKKVAEFFGKEPRKDVNPDEAVAIGAAVQGGVLTGDVKDVLLLDVTPLSLGIETMGGVMTTLIAKNTTIPTKHSQVFSTAEDNQSAVTIHVLQGERKRAADNKSLGQFNLDGINPAPRGMPQIEVTFDIDADGILHVSAKDKNSGKEQKITIKASSGLNEDEIQKMVRDAEANAEADRKFEELVQTRNQGDHLLHSTRKQVEEAGDKLPADDKTAIESALTALETALKGEDKAAIEAKMQELAQVSQKLMEIAQQQHAQQQTAGADASANNAKDDDVVDAEFEEVKDKK</sequence>
<accession>P0A6Z0</accession>
<accession>P04475</accession>
<evidence type="ECO:0000250" key="1"/>
<evidence type="ECO:0000256" key="2">
    <source>
        <dbReference type="SAM" id="MobiDB-lite"/>
    </source>
</evidence>
<evidence type="ECO:0000305" key="3"/>
<organism>
    <name type="scientific">Escherichia coli O157:H7</name>
    <dbReference type="NCBI Taxonomy" id="83334"/>
    <lineage>
        <taxon>Bacteria</taxon>
        <taxon>Pseudomonadati</taxon>
        <taxon>Pseudomonadota</taxon>
        <taxon>Gammaproteobacteria</taxon>
        <taxon>Enterobacterales</taxon>
        <taxon>Enterobacteriaceae</taxon>
        <taxon>Escherichia</taxon>
    </lineage>
</organism>
<gene>
    <name type="primary">dnaK</name>
    <name type="ordered locus">Z0014</name>
    <name type="ordered locus">ECs0014</name>
</gene>
<name>DNAK_ECO57</name>
<comment type="function">
    <text evidence="1">Acts as a chaperone.</text>
</comment>
<comment type="induction">
    <text evidence="1">By stress conditions e.g. heat shock (By similarity).</text>
</comment>
<comment type="similarity">
    <text evidence="3">Belongs to the heat shock protein 70 family.</text>
</comment>
<feature type="initiator methionine" description="Removed" evidence="1">
    <location>
        <position position="1"/>
    </location>
</feature>
<feature type="chain" id="PRO_0000078460" description="Chaperone protein DnaK">
    <location>
        <begin position="2"/>
        <end position="638"/>
    </location>
</feature>
<feature type="region of interest" description="Disordered" evidence="2">
    <location>
        <begin position="602"/>
        <end position="638"/>
    </location>
</feature>
<feature type="compositionally biased region" description="Low complexity" evidence="2">
    <location>
        <begin position="602"/>
        <end position="620"/>
    </location>
</feature>
<feature type="modified residue" description="N6-acetyllysine" evidence="1">
    <location>
        <position position="109"/>
    </location>
</feature>
<feature type="modified residue" description="Phosphothreonine; by autocatalysis" evidence="1">
    <location>
        <position position="199"/>
    </location>
</feature>
<feature type="modified residue" description="N6-acetyllysine" evidence="1">
    <location>
        <position position="245"/>
    </location>
</feature>
<feature type="modified residue" description="N6-acetyllysine" evidence="1">
    <location>
        <position position="304"/>
    </location>
</feature>
<feature type="modified residue" description="N6-acetyllysine" evidence="1">
    <location>
        <position position="421"/>
    </location>
</feature>
<feature type="modified residue" description="N6-acetyllysine" evidence="1">
    <location>
        <position position="556"/>
    </location>
</feature>
<protein>
    <recommendedName>
        <fullName>Chaperone protein DnaK</fullName>
    </recommendedName>
    <alternativeName>
        <fullName>HSP70</fullName>
    </alternativeName>
    <alternativeName>
        <fullName>Heat shock 70 kDa protein</fullName>
    </alternativeName>
    <alternativeName>
        <fullName>Heat shock protein 70</fullName>
    </alternativeName>
</protein>
<dbReference type="EMBL" id="AE005174">
    <property type="protein sequence ID" value="AAG54314.1"/>
    <property type="molecule type" value="Genomic_DNA"/>
</dbReference>
<dbReference type="EMBL" id="BA000007">
    <property type="protein sequence ID" value="BAB33437.1"/>
    <property type="molecule type" value="Genomic_DNA"/>
</dbReference>
<dbReference type="PIR" id="F85481">
    <property type="entry name" value="F85481"/>
</dbReference>
<dbReference type="PIR" id="F90630">
    <property type="entry name" value="F90630"/>
</dbReference>
<dbReference type="RefSeq" id="NP_308041.1">
    <property type="nucleotide sequence ID" value="NC_002695.1"/>
</dbReference>
<dbReference type="RefSeq" id="WP_000516135.1">
    <property type="nucleotide sequence ID" value="NZ_VOAI01000002.1"/>
</dbReference>
<dbReference type="SMR" id="P0A6Z0"/>
<dbReference type="STRING" id="155864.Z0014"/>
<dbReference type="GeneID" id="913406"/>
<dbReference type="GeneID" id="93777429"/>
<dbReference type="KEGG" id="ece:Z0014"/>
<dbReference type="KEGG" id="ecs:ECs_0014"/>
<dbReference type="PATRIC" id="fig|386585.9.peg.110"/>
<dbReference type="eggNOG" id="COG0443">
    <property type="taxonomic scope" value="Bacteria"/>
</dbReference>
<dbReference type="HOGENOM" id="CLU_005965_2_1_6"/>
<dbReference type="OMA" id="MGTDWKI"/>
<dbReference type="Proteomes" id="UP000000558">
    <property type="component" value="Chromosome"/>
</dbReference>
<dbReference type="Proteomes" id="UP000002519">
    <property type="component" value="Chromosome"/>
</dbReference>
<dbReference type="GO" id="GO:0005524">
    <property type="term" value="F:ATP binding"/>
    <property type="evidence" value="ECO:0007669"/>
    <property type="project" value="UniProtKB-UniRule"/>
</dbReference>
<dbReference type="GO" id="GO:0140662">
    <property type="term" value="F:ATP-dependent protein folding chaperone"/>
    <property type="evidence" value="ECO:0007669"/>
    <property type="project" value="InterPro"/>
</dbReference>
<dbReference type="GO" id="GO:0051082">
    <property type="term" value="F:unfolded protein binding"/>
    <property type="evidence" value="ECO:0007669"/>
    <property type="project" value="InterPro"/>
</dbReference>
<dbReference type="CDD" id="cd10234">
    <property type="entry name" value="ASKHA_NBD_HSP70_DnaK-like"/>
    <property type="match status" value="1"/>
</dbReference>
<dbReference type="FunFam" id="2.60.34.10:FF:000014">
    <property type="entry name" value="Chaperone protein DnaK HSP70"/>
    <property type="match status" value="1"/>
</dbReference>
<dbReference type="FunFam" id="1.20.1270.10:FF:000001">
    <property type="entry name" value="Molecular chaperone DnaK"/>
    <property type="match status" value="1"/>
</dbReference>
<dbReference type="FunFam" id="3.30.420.40:FF:000004">
    <property type="entry name" value="Molecular chaperone DnaK"/>
    <property type="match status" value="1"/>
</dbReference>
<dbReference type="FunFam" id="3.90.640.10:FF:000003">
    <property type="entry name" value="Molecular chaperone DnaK"/>
    <property type="match status" value="1"/>
</dbReference>
<dbReference type="Gene3D" id="1.20.1270.10">
    <property type="match status" value="1"/>
</dbReference>
<dbReference type="Gene3D" id="3.30.420.40">
    <property type="match status" value="2"/>
</dbReference>
<dbReference type="Gene3D" id="3.90.640.10">
    <property type="entry name" value="Actin, Chain A, domain 4"/>
    <property type="match status" value="1"/>
</dbReference>
<dbReference type="Gene3D" id="2.60.34.10">
    <property type="entry name" value="Substrate Binding Domain Of DNAk, Chain A, domain 1"/>
    <property type="match status" value="1"/>
</dbReference>
<dbReference type="HAMAP" id="MF_00332">
    <property type="entry name" value="DnaK"/>
    <property type="match status" value="1"/>
</dbReference>
<dbReference type="InterPro" id="IPR043129">
    <property type="entry name" value="ATPase_NBD"/>
</dbReference>
<dbReference type="InterPro" id="IPR012725">
    <property type="entry name" value="Chaperone_DnaK"/>
</dbReference>
<dbReference type="InterPro" id="IPR018181">
    <property type="entry name" value="Heat_shock_70_CS"/>
</dbReference>
<dbReference type="InterPro" id="IPR029048">
    <property type="entry name" value="HSP70_C_sf"/>
</dbReference>
<dbReference type="InterPro" id="IPR029047">
    <property type="entry name" value="HSP70_peptide-bd_sf"/>
</dbReference>
<dbReference type="InterPro" id="IPR013126">
    <property type="entry name" value="Hsp_70_fam"/>
</dbReference>
<dbReference type="NCBIfam" id="NF001413">
    <property type="entry name" value="PRK00290.1"/>
    <property type="match status" value="1"/>
</dbReference>
<dbReference type="NCBIfam" id="NF003520">
    <property type="entry name" value="PRK05183.1"/>
    <property type="match status" value="1"/>
</dbReference>
<dbReference type="NCBIfam" id="TIGR02350">
    <property type="entry name" value="prok_dnaK"/>
    <property type="match status" value="1"/>
</dbReference>
<dbReference type="PANTHER" id="PTHR19375">
    <property type="entry name" value="HEAT SHOCK PROTEIN 70KDA"/>
    <property type="match status" value="1"/>
</dbReference>
<dbReference type="Pfam" id="PF00012">
    <property type="entry name" value="HSP70"/>
    <property type="match status" value="1"/>
</dbReference>
<dbReference type="PRINTS" id="PR00301">
    <property type="entry name" value="HEATSHOCK70"/>
</dbReference>
<dbReference type="SUPFAM" id="SSF53067">
    <property type="entry name" value="Actin-like ATPase domain"/>
    <property type="match status" value="2"/>
</dbReference>
<dbReference type="SUPFAM" id="SSF100934">
    <property type="entry name" value="Heat shock protein 70kD (HSP70), C-terminal subdomain"/>
    <property type="match status" value="1"/>
</dbReference>
<dbReference type="SUPFAM" id="SSF100920">
    <property type="entry name" value="Heat shock protein 70kD (HSP70), peptide-binding domain"/>
    <property type="match status" value="1"/>
</dbReference>
<dbReference type="PROSITE" id="PS00297">
    <property type="entry name" value="HSP70_1"/>
    <property type="match status" value="1"/>
</dbReference>
<dbReference type="PROSITE" id="PS00329">
    <property type="entry name" value="HSP70_2"/>
    <property type="match status" value="1"/>
</dbReference>
<dbReference type="PROSITE" id="PS01036">
    <property type="entry name" value="HSP70_3"/>
    <property type="match status" value="1"/>
</dbReference>
<keyword id="KW-0007">Acetylation</keyword>
<keyword id="KW-0067">ATP-binding</keyword>
<keyword id="KW-0143">Chaperone</keyword>
<keyword id="KW-0547">Nucleotide-binding</keyword>
<keyword id="KW-0597">Phosphoprotein</keyword>
<keyword id="KW-1185">Reference proteome</keyword>
<keyword id="KW-0346">Stress response</keyword>